<comment type="function">
    <text evidence="1">This protein binds to the 23S rRNA, and is important in its secondary structure. It is located near the subunit interface in the base of the L7/L12 stalk, and near the tRNA binding site of the peptidyltransferase center.</text>
</comment>
<comment type="subunit">
    <text evidence="1">Part of the 50S ribosomal subunit.</text>
</comment>
<comment type="similarity">
    <text evidence="1">Belongs to the universal ribosomal protein uL6 family.</text>
</comment>
<proteinExistence type="inferred from homology"/>
<accession>B3PWT6</accession>
<dbReference type="EMBL" id="CP001074">
    <property type="protein sequence ID" value="ACE90734.1"/>
    <property type="molecule type" value="Genomic_DNA"/>
</dbReference>
<dbReference type="SMR" id="B3PWT6"/>
<dbReference type="KEGG" id="rec:RHECIAT_CH0001764"/>
<dbReference type="eggNOG" id="COG0097">
    <property type="taxonomic scope" value="Bacteria"/>
</dbReference>
<dbReference type="HOGENOM" id="CLU_065464_1_2_5"/>
<dbReference type="Proteomes" id="UP000008817">
    <property type="component" value="Chromosome"/>
</dbReference>
<dbReference type="GO" id="GO:0022625">
    <property type="term" value="C:cytosolic large ribosomal subunit"/>
    <property type="evidence" value="ECO:0007669"/>
    <property type="project" value="TreeGrafter"/>
</dbReference>
<dbReference type="GO" id="GO:0019843">
    <property type="term" value="F:rRNA binding"/>
    <property type="evidence" value="ECO:0007669"/>
    <property type="project" value="UniProtKB-UniRule"/>
</dbReference>
<dbReference type="GO" id="GO:0003735">
    <property type="term" value="F:structural constituent of ribosome"/>
    <property type="evidence" value="ECO:0007669"/>
    <property type="project" value="InterPro"/>
</dbReference>
<dbReference type="GO" id="GO:0002181">
    <property type="term" value="P:cytoplasmic translation"/>
    <property type="evidence" value="ECO:0007669"/>
    <property type="project" value="TreeGrafter"/>
</dbReference>
<dbReference type="FunFam" id="3.90.930.12:FF:000001">
    <property type="entry name" value="50S ribosomal protein L6"/>
    <property type="match status" value="1"/>
</dbReference>
<dbReference type="Gene3D" id="3.90.930.12">
    <property type="entry name" value="Ribosomal protein L6, alpha-beta domain"/>
    <property type="match status" value="2"/>
</dbReference>
<dbReference type="HAMAP" id="MF_01365_B">
    <property type="entry name" value="Ribosomal_uL6_B"/>
    <property type="match status" value="1"/>
</dbReference>
<dbReference type="InterPro" id="IPR000702">
    <property type="entry name" value="Ribosomal_uL6-like"/>
</dbReference>
<dbReference type="InterPro" id="IPR036789">
    <property type="entry name" value="Ribosomal_uL6-like_a/b-dom_sf"/>
</dbReference>
<dbReference type="InterPro" id="IPR020040">
    <property type="entry name" value="Ribosomal_uL6_a/b-dom"/>
</dbReference>
<dbReference type="InterPro" id="IPR019906">
    <property type="entry name" value="Ribosomal_uL6_bac-type"/>
</dbReference>
<dbReference type="InterPro" id="IPR002358">
    <property type="entry name" value="Ribosomal_uL6_CS"/>
</dbReference>
<dbReference type="NCBIfam" id="TIGR03654">
    <property type="entry name" value="L6_bact"/>
    <property type="match status" value="1"/>
</dbReference>
<dbReference type="PANTHER" id="PTHR11655">
    <property type="entry name" value="60S/50S RIBOSOMAL PROTEIN L6/L9"/>
    <property type="match status" value="1"/>
</dbReference>
<dbReference type="PANTHER" id="PTHR11655:SF14">
    <property type="entry name" value="LARGE RIBOSOMAL SUBUNIT PROTEIN UL6M"/>
    <property type="match status" value="1"/>
</dbReference>
<dbReference type="Pfam" id="PF00347">
    <property type="entry name" value="Ribosomal_L6"/>
    <property type="match status" value="2"/>
</dbReference>
<dbReference type="PIRSF" id="PIRSF002162">
    <property type="entry name" value="Ribosomal_L6"/>
    <property type="match status" value="1"/>
</dbReference>
<dbReference type="PRINTS" id="PR00059">
    <property type="entry name" value="RIBOSOMALL6"/>
</dbReference>
<dbReference type="SUPFAM" id="SSF56053">
    <property type="entry name" value="Ribosomal protein L6"/>
    <property type="match status" value="2"/>
</dbReference>
<dbReference type="PROSITE" id="PS00525">
    <property type="entry name" value="RIBOSOMAL_L6_1"/>
    <property type="match status" value="1"/>
</dbReference>
<reference key="1">
    <citation type="journal article" date="2010" name="Appl. Environ. Microbiol.">
        <title>Conserved symbiotic plasmid DNA sequences in the multireplicon pangenomic structure of Rhizobium etli.</title>
        <authorList>
            <person name="Gonzalez V."/>
            <person name="Acosta J.L."/>
            <person name="Santamaria R.I."/>
            <person name="Bustos P."/>
            <person name="Fernandez J.L."/>
            <person name="Hernandez Gonzalez I.L."/>
            <person name="Diaz R."/>
            <person name="Flores M."/>
            <person name="Palacios R."/>
            <person name="Mora J."/>
            <person name="Davila G."/>
        </authorList>
    </citation>
    <scope>NUCLEOTIDE SEQUENCE [LARGE SCALE GENOMIC DNA]</scope>
    <source>
        <strain>CIAT 652</strain>
    </source>
</reference>
<protein>
    <recommendedName>
        <fullName evidence="1">Large ribosomal subunit protein uL6</fullName>
    </recommendedName>
    <alternativeName>
        <fullName evidence="2">50S ribosomal protein L6</fullName>
    </alternativeName>
</protein>
<evidence type="ECO:0000255" key="1">
    <source>
        <dbReference type="HAMAP-Rule" id="MF_01365"/>
    </source>
</evidence>
<evidence type="ECO:0000305" key="2"/>
<sequence>MSRIGKKPVQVPAGITATVDGQKVTAKGPKGELFFVANDEISLKLEDNAVVVTPLNQSKNARSKWGMSRTMIEGIFKGVKDGFERKLEINGVGYRAAMQGKNLQLALGFSHDVVYEPPVGITIAVPKPTEIVVSGINKQQVGQVAAEIREYRGPEPYKGKGVKYADERIVRKEGKKK</sequence>
<organism>
    <name type="scientific">Rhizobium etli (strain CIAT 652)</name>
    <dbReference type="NCBI Taxonomy" id="491916"/>
    <lineage>
        <taxon>Bacteria</taxon>
        <taxon>Pseudomonadati</taxon>
        <taxon>Pseudomonadota</taxon>
        <taxon>Alphaproteobacteria</taxon>
        <taxon>Hyphomicrobiales</taxon>
        <taxon>Rhizobiaceae</taxon>
        <taxon>Rhizobium/Agrobacterium group</taxon>
        <taxon>Rhizobium</taxon>
    </lineage>
</organism>
<gene>
    <name evidence="1" type="primary">rplF</name>
    <name type="ordered locus">RHECIAT_CH0001764</name>
</gene>
<feature type="chain" id="PRO_1000144035" description="Large ribosomal subunit protein uL6">
    <location>
        <begin position="1"/>
        <end position="177"/>
    </location>
</feature>
<name>RL6_RHIE6</name>
<keyword id="KW-0687">Ribonucleoprotein</keyword>
<keyword id="KW-0689">Ribosomal protein</keyword>
<keyword id="KW-0694">RNA-binding</keyword>
<keyword id="KW-0699">rRNA-binding</keyword>